<comment type="function">
    <text evidence="1">Required for formate dehydrogenase (FDH) activity. Acts as a sulfur carrier protein that transfers sulfur from IscS to the molybdenum cofactor prior to its insertion into FDH.</text>
</comment>
<comment type="subcellular location">
    <subcellularLocation>
        <location evidence="1">Cytoplasm</location>
    </subcellularLocation>
</comment>
<comment type="similarity">
    <text evidence="1">Belongs to the FdhD family.</text>
</comment>
<organism>
    <name type="scientific">Salmonella dublin (strain CT_02021853)</name>
    <dbReference type="NCBI Taxonomy" id="439851"/>
    <lineage>
        <taxon>Bacteria</taxon>
        <taxon>Pseudomonadati</taxon>
        <taxon>Pseudomonadota</taxon>
        <taxon>Gammaproteobacteria</taxon>
        <taxon>Enterobacterales</taxon>
        <taxon>Enterobacteriaceae</taxon>
        <taxon>Salmonella</taxon>
    </lineage>
</organism>
<accession>B5FP28</accession>
<dbReference type="EMBL" id="CP001144">
    <property type="protein sequence ID" value="ACH73722.1"/>
    <property type="molecule type" value="Genomic_DNA"/>
</dbReference>
<dbReference type="RefSeq" id="WP_001059743.1">
    <property type="nucleotide sequence ID" value="NC_011205.1"/>
</dbReference>
<dbReference type="SMR" id="B5FP28"/>
<dbReference type="KEGG" id="sed:SeD_A4430"/>
<dbReference type="HOGENOM" id="CLU_056887_2_0_6"/>
<dbReference type="Proteomes" id="UP000008322">
    <property type="component" value="Chromosome"/>
</dbReference>
<dbReference type="GO" id="GO:0005737">
    <property type="term" value="C:cytoplasm"/>
    <property type="evidence" value="ECO:0007669"/>
    <property type="project" value="UniProtKB-SubCell"/>
</dbReference>
<dbReference type="GO" id="GO:0097163">
    <property type="term" value="F:sulfur carrier activity"/>
    <property type="evidence" value="ECO:0007669"/>
    <property type="project" value="UniProtKB-UniRule"/>
</dbReference>
<dbReference type="GO" id="GO:0016783">
    <property type="term" value="F:sulfurtransferase activity"/>
    <property type="evidence" value="ECO:0007669"/>
    <property type="project" value="InterPro"/>
</dbReference>
<dbReference type="GO" id="GO:0006777">
    <property type="term" value="P:Mo-molybdopterin cofactor biosynthetic process"/>
    <property type="evidence" value="ECO:0007669"/>
    <property type="project" value="UniProtKB-UniRule"/>
</dbReference>
<dbReference type="Gene3D" id="3.10.20.10">
    <property type="match status" value="1"/>
</dbReference>
<dbReference type="Gene3D" id="3.40.140.10">
    <property type="entry name" value="Cytidine Deaminase, domain 2"/>
    <property type="match status" value="1"/>
</dbReference>
<dbReference type="HAMAP" id="MF_00187">
    <property type="entry name" value="FdhD"/>
    <property type="match status" value="1"/>
</dbReference>
<dbReference type="InterPro" id="IPR016193">
    <property type="entry name" value="Cytidine_deaminase-like"/>
</dbReference>
<dbReference type="InterPro" id="IPR003786">
    <property type="entry name" value="FdhD"/>
</dbReference>
<dbReference type="NCBIfam" id="TIGR00129">
    <property type="entry name" value="fdhD_narQ"/>
    <property type="match status" value="1"/>
</dbReference>
<dbReference type="PANTHER" id="PTHR30592">
    <property type="entry name" value="FORMATE DEHYDROGENASE"/>
    <property type="match status" value="1"/>
</dbReference>
<dbReference type="PANTHER" id="PTHR30592:SF1">
    <property type="entry name" value="SULFUR CARRIER PROTEIN FDHD"/>
    <property type="match status" value="1"/>
</dbReference>
<dbReference type="Pfam" id="PF02634">
    <property type="entry name" value="FdhD-NarQ"/>
    <property type="match status" value="1"/>
</dbReference>
<dbReference type="PIRSF" id="PIRSF015626">
    <property type="entry name" value="FdhD"/>
    <property type="match status" value="1"/>
</dbReference>
<dbReference type="SUPFAM" id="SSF53927">
    <property type="entry name" value="Cytidine deaminase-like"/>
    <property type="match status" value="1"/>
</dbReference>
<feature type="chain" id="PRO_1000098787" description="Sulfur carrier protein FdhD">
    <location>
        <begin position="1"/>
        <end position="278"/>
    </location>
</feature>
<feature type="active site" description="Cysteine persulfide intermediate" evidence="1">
    <location>
        <position position="121"/>
    </location>
</feature>
<feature type="binding site" evidence="1">
    <location>
        <begin position="260"/>
        <end position="265"/>
    </location>
    <ligand>
        <name>Mo-bis(molybdopterin guanine dinucleotide)</name>
        <dbReference type="ChEBI" id="CHEBI:60539"/>
    </ligand>
</feature>
<protein>
    <recommendedName>
        <fullName evidence="1">Sulfur carrier protein FdhD</fullName>
    </recommendedName>
</protein>
<name>FDHD_SALDC</name>
<keyword id="KW-0963">Cytoplasm</keyword>
<keyword id="KW-0501">Molybdenum cofactor biosynthesis</keyword>
<sequence length="278" mass="30256">MNNILSEEVLNVTDFTTSRQLTLWKREDLQSPQLDDVAEEVPVALVYNGISHVVMMASPKDLTHFAMGFSLSEGIIDSPREIYGMDVVPSCNGLEVQIDLSSRRFMGLKARRRALAGRTGCGVCGVEQLNDIGKPVQPLPFSQTFNLGNLDRALKHLNDFQPTGKLTGCTHAAAWVMPSGELAGGHEDVGRHVALDKLLGRRATEGEEWRQGAALVSSRASYEMVQKSAMCGVEILFAVSAATTLAVDVAERCNLTLVGFCKPGRATIYTHPQRLIAD</sequence>
<gene>
    <name evidence="1" type="primary">fdhD</name>
    <name type="ordered locus">SeD_A4430</name>
</gene>
<evidence type="ECO:0000255" key="1">
    <source>
        <dbReference type="HAMAP-Rule" id="MF_00187"/>
    </source>
</evidence>
<reference key="1">
    <citation type="journal article" date="2011" name="J. Bacteriol.">
        <title>Comparative genomics of 28 Salmonella enterica isolates: evidence for CRISPR-mediated adaptive sublineage evolution.</title>
        <authorList>
            <person name="Fricke W.F."/>
            <person name="Mammel M.K."/>
            <person name="McDermott P.F."/>
            <person name="Tartera C."/>
            <person name="White D.G."/>
            <person name="Leclerc J.E."/>
            <person name="Ravel J."/>
            <person name="Cebula T.A."/>
        </authorList>
    </citation>
    <scope>NUCLEOTIDE SEQUENCE [LARGE SCALE GENOMIC DNA]</scope>
    <source>
        <strain>CT_02021853</strain>
    </source>
</reference>
<proteinExistence type="inferred from homology"/>